<keyword id="KW-0012">Acyltransferase</keyword>
<keyword id="KW-0963">Cytoplasm</keyword>
<keyword id="KW-1185">Reference proteome</keyword>
<keyword id="KW-0808">Transferase</keyword>
<protein>
    <recommendedName>
        <fullName evidence="1">Octanoyltransferase</fullName>
        <ecNumber evidence="1">2.3.1.181</ecNumber>
    </recommendedName>
    <alternativeName>
        <fullName evidence="1">Lipoate-protein ligase B</fullName>
    </alternativeName>
    <alternativeName>
        <fullName evidence="1">Lipoyl/octanoyl transferase</fullName>
    </alternativeName>
    <alternativeName>
        <fullName evidence="1">Octanoyl-[acyl-carrier-protein]-protein N-octanoyltransferase</fullName>
    </alternativeName>
</protein>
<gene>
    <name evidence="1" type="primary">lipB</name>
    <name type="ordered locus">Shew_2941</name>
</gene>
<feature type="chain" id="PRO_0000321669" description="Octanoyltransferase">
    <location>
        <begin position="1"/>
        <end position="218"/>
    </location>
</feature>
<feature type="domain" description="BPL/LPL catalytic" evidence="2">
    <location>
        <begin position="34"/>
        <end position="209"/>
    </location>
</feature>
<feature type="active site" description="Acyl-thioester intermediate" evidence="1">
    <location>
        <position position="171"/>
    </location>
</feature>
<feature type="binding site" evidence="1">
    <location>
        <begin position="73"/>
        <end position="80"/>
    </location>
    <ligand>
        <name>substrate</name>
    </ligand>
</feature>
<feature type="binding site" evidence="1">
    <location>
        <begin position="140"/>
        <end position="142"/>
    </location>
    <ligand>
        <name>substrate</name>
    </ligand>
</feature>
<feature type="binding site" evidence="1">
    <location>
        <begin position="153"/>
        <end position="155"/>
    </location>
    <ligand>
        <name>substrate</name>
    </ligand>
</feature>
<feature type="site" description="Lowers pKa of active site Cys" evidence="1">
    <location>
        <position position="137"/>
    </location>
</feature>
<name>LIPB_SHELP</name>
<evidence type="ECO:0000255" key="1">
    <source>
        <dbReference type="HAMAP-Rule" id="MF_00013"/>
    </source>
</evidence>
<evidence type="ECO:0000255" key="2">
    <source>
        <dbReference type="PROSITE-ProRule" id="PRU01067"/>
    </source>
</evidence>
<proteinExistence type="inferred from homology"/>
<comment type="function">
    <text evidence="1">Catalyzes the transfer of endogenously produced octanoic acid from octanoyl-acyl-carrier-protein onto the lipoyl domains of lipoate-dependent enzymes. Lipoyl-ACP can also act as a substrate although octanoyl-ACP is likely to be the physiological substrate.</text>
</comment>
<comment type="catalytic activity">
    <reaction evidence="1">
        <text>octanoyl-[ACP] + L-lysyl-[protein] = N(6)-octanoyl-L-lysyl-[protein] + holo-[ACP] + H(+)</text>
        <dbReference type="Rhea" id="RHEA:17665"/>
        <dbReference type="Rhea" id="RHEA-COMP:9636"/>
        <dbReference type="Rhea" id="RHEA-COMP:9685"/>
        <dbReference type="Rhea" id="RHEA-COMP:9752"/>
        <dbReference type="Rhea" id="RHEA-COMP:9928"/>
        <dbReference type="ChEBI" id="CHEBI:15378"/>
        <dbReference type="ChEBI" id="CHEBI:29969"/>
        <dbReference type="ChEBI" id="CHEBI:64479"/>
        <dbReference type="ChEBI" id="CHEBI:78463"/>
        <dbReference type="ChEBI" id="CHEBI:78809"/>
        <dbReference type="EC" id="2.3.1.181"/>
    </reaction>
</comment>
<comment type="pathway">
    <text evidence="1">Protein modification; protein lipoylation via endogenous pathway; protein N(6)-(lipoyl)lysine from octanoyl-[acyl-carrier-protein]: step 1/2.</text>
</comment>
<comment type="subcellular location">
    <subcellularLocation>
        <location evidence="1">Cytoplasm</location>
    </subcellularLocation>
</comment>
<comment type="miscellaneous">
    <text evidence="1">In the reaction, the free carboxyl group of octanoic acid is attached via an amide linkage to the epsilon-amino group of a specific lysine residue of lipoyl domains of lipoate-dependent enzymes.</text>
</comment>
<comment type="similarity">
    <text evidence="1">Belongs to the LipB family.</text>
</comment>
<accession>A3QH59</accession>
<organism>
    <name type="scientific">Shewanella loihica (strain ATCC BAA-1088 / PV-4)</name>
    <dbReference type="NCBI Taxonomy" id="323850"/>
    <lineage>
        <taxon>Bacteria</taxon>
        <taxon>Pseudomonadati</taxon>
        <taxon>Pseudomonadota</taxon>
        <taxon>Gammaproteobacteria</taxon>
        <taxon>Alteromonadales</taxon>
        <taxon>Shewanellaceae</taxon>
        <taxon>Shewanella</taxon>
    </lineage>
</organism>
<reference key="1">
    <citation type="submission" date="2007-03" db="EMBL/GenBank/DDBJ databases">
        <title>Complete sequence of Shewanella loihica PV-4.</title>
        <authorList>
            <consortium name="US DOE Joint Genome Institute"/>
            <person name="Copeland A."/>
            <person name="Lucas S."/>
            <person name="Lapidus A."/>
            <person name="Barry K."/>
            <person name="Detter J.C."/>
            <person name="Glavina del Rio T."/>
            <person name="Hammon N."/>
            <person name="Israni S."/>
            <person name="Dalin E."/>
            <person name="Tice H."/>
            <person name="Pitluck S."/>
            <person name="Chain P."/>
            <person name="Malfatti S."/>
            <person name="Shin M."/>
            <person name="Vergez L."/>
            <person name="Schmutz J."/>
            <person name="Larimer F."/>
            <person name="Land M."/>
            <person name="Hauser L."/>
            <person name="Kyrpides N."/>
            <person name="Mikhailova N."/>
            <person name="Romine M.F."/>
            <person name="Serres G."/>
            <person name="Fredrickson J."/>
            <person name="Tiedje J."/>
            <person name="Richardson P."/>
        </authorList>
    </citation>
    <scope>NUCLEOTIDE SEQUENCE [LARGE SCALE GENOMIC DNA]</scope>
    <source>
        <strain>ATCC BAA-1088 / PV-4</strain>
    </source>
</reference>
<sequence length="218" mass="24522">MPLKDTVLHIRHLGRQDYESVWHAMQEYTDNRDETSRDELWIVEHPPVFTQGQAGKSEHILNPGDIPVIQVDRGGQVTYHGPGQLVAYPLLDIKRLKIGVRQLVTDIEQSIVKMLALYGIEAYPKADAPGVYVEERKIASLGLRIRKGCSFHGLALNVDMDMSPFQRINPCGYAGLEMAQCKPLKGPQSVEEAGEKLIQTFSQELGYQHLEHHQGLTD</sequence>
<dbReference type="EC" id="2.3.1.181" evidence="1"/>
<dbReference type="EMBL" id="CP000606">
    <property type="protein sequence ID" value="ABO24807.1"/>
    <property type="molecule type" value="Genomic_DNA"/>
</dbReference>
<dbReference type="SMR" id="A3QH59"/>
<dbReference type="STRING" id="323850.Shew_2941"/>
<dbReference type="KEGG" id="slo:Shew_2941"/>
<dbReference type="eggNOG" id="COG0321">
    <property type="taxonomic scope" value="Bacteria"/>
</dbReference>
<dbReference type="HOGENOM" id="CLU_035168_3_1_6"/>
<dbReference type="UniPathway" id="UPA00538">
    <property type="reaction ID" value="UER00592"/>
</dbReference>
<dbReference type="Proteomes" id="UP000001558">
    <property type="component" value="Chromosome"/>
</dbReference>
<dbReference type="GO" id="GO:0005737">
    <property type="term" value="C:cytoplasm"/>
    <property type="evidence" value="ECO:0007669"/>
    <property type="project" value="UniProtKB-SubCell"/>
</dbReference>
<dbReference type="GO" id="GO:0033819">
    <property type="term" value="F:lipoyl(octanoyl) transferase activity"/>
    <property type="evidence" value="ECO:0007669"/>
    <property type="project" value="UniProtKB-EC"/>
</dbReference>
<dbReference type="GO" id="GO:0036211">
    <property type="term" value="P:protein modification process"/>
    <property type="evidence" value="ECO:0007669"/>
    <property type="project" value="InterPro"/>
</dbReference>
<dbReference type="CDD" id="cd16444">
    <property type="entry name" value="LipB"/>
    <property type="match status" value="1"/>
</dbReference>
<dbReference type="FunFam" id="3.30.930.10:FF:000020">
    <property type="entry name" value="Octanoyltransferase"/>
    <property type="match status" value="1"/>
</dbReference>
<dbReference type="Gene3D" id="3.30.930.10">
    <property type="entry name" value="Bira Bifunctional Protein, Domain 2"/>
    <property type="match status" value="1"/>
</dbReference>
<dbReference type="HAMAP" id="MF_00013">
    <property type="entry name" value="LipB"/>
    <property type="match status" value="1"/>
</dbReference>
<dbReference type="InterPro" id="IPR045864">
    <property type="entry name" value="aa-tRNA-synth_II/BPL/LPL"/>
</dbReference>
<dbReference type="InterPro" id="IPR004143">
    <property type="entry name" value="BPL_LPL_catalytic"/>
</dbReference>
<dbReference type="InterPro" id="IPR000544">
    <property type="entry name" value="Octanoyltransferase"/>
</dbReference>
<dbReference type="InterPro" id="IPR020605">
    <property type="entry name" value="Octanoyltransferase_CS"/>
</dbReference>
<dbReference type="NCBIfam" id="TIGR00214">
    <property type="entry name" value="lipB"/>
    <property type="match status" value="1"/>
</dbReference>
<dbReference type="NCBIfam" id="NF010922">
    <property type="entry name" value="PRK14342.1"/>
    <property type="match status" value="1"/>
</dbReference>
<dbReference type="PANTHER" id="PTHR10993:SF7">
    <property type="entry name" value="LIPOYLTRANSFERASE 2, MITOCHONDRIAL-RELATED"/>
    <property type="match status" value="1"/>
</dbReference>
<dbReference type="PANTHER" id="PTHR10993">
    <property type="entry name" value="OCTANOYLTRANSFERASE"/>
    <property type="match status" value="1"/>
</dbReference>
<dbReference type="Pfam" id="PF21948">
    <property type="entry name" value="LplA-B_cat"/>
    <property type="match status" value="1"/>
</dbReference>
<dbReference type="PIRSF" id="PIRSF016262">
    <property type="entry name" value="LPLase"/>
    <property type="match status" value="1"/>
</dbReference>
<dbReference type="SUPFAM" id="SSF55681">
    <property type="entry name" value="Class II aaRS and biotin synthetases"/>
    <property type="match status" value="1"/>
</dbReference>
<dbReference type="PROSITE" id="PS51733">
    <property type="entry name" value="BPL_LPL_CATALYTIC"/>
    <property type="match status" value="1"/>
</dbReference>
<dbReference type="PROSITE" id="PS01313">
    <property type="entry name" value="LIPB"/>
    <property type="match status" value="1"/>
</dbReference>